<protein>
    <recommendedName>
        <fullName evidence="1">Rhamnulose-1-phosphate aldolase</fullName>
        <ecNumber evidence="1">4.1.2.19</ecNumber>
    </recommendedName>
</protein>
<accession>B5YZ39</accession>
<name>RHAD_ECO5E</name>
<keyword id="KW-0963">Cytoplasm</keyword>
<keyword id="KW-0456">Lyase</keyword>
<keyword id="KW-0479">Metal-binding</keyword>
<keyword id="KW-0684">Rhamnose metabolism</keyword>
<keyword id="KW-0862">Zinc</keyword>
<reference key="1">
    <citation type="journal article" date="2011" name="Proc. Natl. Acad. Sci. U.S.A.">
        <title>Genomic anatomy of Escherichia coli O157:H7 outbreaks.</title>
        <authorList>
            <person name="Eppinger M."/>
            <person name="Mammel M.K."/>
            <person name="Leclerc J.E."/>
            <person name="Ravel J."/>
            <person name="Cebula T.A."/>
        </authorList>
    </citation>
    <scope>NUCLEOTIDE SEQUENCE [LARGE SCALE GENOMIC DNA]</scope>
    <source>
        <strain>EC4115 / EHEC</strain>
    </source>
</reference>
<comment type="function">
    <text evidence="1">Catalyzes the reversible cleavage of L-rhamnulose-1-phosphate to dihydroxyacetone phosphate (DHAP) and L-lactaldehyde.</text>
</comment>
<comment type="catalytic activity">
    <reaction evidence="1">
        <text>L-rhamnulose 1-phosphate = (S)-lactaldehyde + dihydroxyacetone phosphate</text>
        <dbReference type="Rhea" id="RHEA:19689"/>
        <dbReference type="ChEBI" id="CHEBI:18041"/>
        <dbReference type="ChEBI" id="CHEBI:57642"/>
        <dbReference type="ChEBI" id="CHEBI:58313"/>
        <dbReference type="EC" id="4.1.2.19"/>
    </reaction>
</comment>
<comment type="cofactor">
    <cofactor evidence="1">
        <name>Zn(2+)</name>
        <dbReference type="ChEBI" id="CHEBI:29105"/>
    </cofactor>
    <text evidence="1">Binds 1 zinc ion per subunit.</text>
</comment>
<comment type="pathway">
    <text evidence="1">Carbohydrate degradation; L-rhamnose degradation; glycerone phosphate from L-rhamnose: step 3/3.</text>
</comment>
<comment type="subunit">
    <text evidence="1">Homotetramer.</text>
</comment>
<comment type="subcellular location">
    <subcellularLocation>
        <location evidence="1">Cytoplasm</location>
    </subcellularLocation>
</comment>
<comment type="similarity">
    <text evidence="1">Belongs to the aldolase class II family. RhaD subfamily.</text>
</comment>
<feature type="chain" id="PRO_1000193724" description="Rhamnulose-1-phosphate aldolase">
    <location>
        <begin position="1"/>
        <end position="274"/>
    </location>
</feature>
<feature type="active site" evidence="1">
    <location>
        <position position="117"/>
    </location>
</feature>
<feature type="binding site" evidence="1">
    <location>
        <position position="141"/>
    </location>
    <ligand>
        <name>Zn(2+)</name>
        <dbReference type="ChEBI" id="CHEBI:29105"/>
    </ligand>
</feature>
<feature type="binding site" evidence="1">
    <location>
        <position position="143"/>
    </location>
    <ligand>
        <name>Zn(2+)</name>
        <dbReference type="ChEBI" id="CHEBI:29105"/>
    </ligand>
</feature>
<feature type="binding site" evidence="1">
    <location>
        <position position="212"/>
    </location>
    <ligand>
        <name>Zn(2+)</name>
        <dbReference type="ChEBI" id="CHEBI:29105"/>
    </ligand>
</feature>
<gene>
    <name evidence="1" type="primary">rhaD</name>
    <name type="ordered locus">ECH74115_5354</name>
</gene>
<dbReference type="EC" id="4.1.2.19" evidence="1"/>
<dbReference type="EMBL" id="CP001164">
    <property type="protein sequence ID" value="ACI39623.1"/>
    <property type="molecule type" value="Genomic_DNA"/>
</dbReference>
<dbReference type="RefSeq" id="WP_001179721.1">
    <property type="nucleotide sequence ID" value="NC_011353.1"/>
</dbReference>
<dbReference type="SMR" id="B5YZ39"/>
<dbReference type="KEGG" id="ecf:ECH74115_5354"/>
<dbReference type="HOGENOM" id="CLU_076831_0_0_6"/>
<dbReference type="UniPathway" id="UPA00541">
    <property type="reaction ID" value="UER00603"/>
</dbReference>
<dbReference type="GO" id="GO:0005829">
    <property type="term" value="C:cytosol"/>
    <property type="evidence" value="ECO:0007669"/>
    <property type="project" value="TreeGrafter"/>
</dbReference>
<dbReference type="GO" id="GO:0046872">
    <property type="term" value="F:metal ion binding"/>
    <property type="evidence" value="ECO:0007669"/>
    <property type="project" value="UniProtKB-KW"/>
</dbReference>
<dbReference type="GO" id="GO:0008994">
    <property type="term" value="F:rhamnulose-1-phosphate aldolase activity"/>
    <property type="evidence" value="ECO:0007669"/>
    <property type="project" value="UniProtKB-UniRule"/>
</dbReference>
<dbReference type="GO" id="GO:0019323">
    <property type="term" value="P:pentose catabolic process"/>
    <property type="evidence" value="ECO:0007669"/>
    <property type="project" value="TreeGrafter"/>
</dbReference>
<dbReference type="GO" id="GO:0019301">
    <property type="term" value="P:rhamnose catabolic process"/>
    <property type="evidence" value="ECO:0007669"/>
    <property type="project" value="UniProtKB-UniRule"/>
</dbReference>
<dbReference type="CDD" id="cd00398">
    <property type="entry name" value="Aldolase_II"/>
    <property type="match status" value="1"/>
</dbReference>
<dbReference type="FunFam" id="3.40.225.10:FF:000006">
    <property type="entry name" value="Rhamnulose-1-phosphate aldolase"/>
    <property type="match status" value="1"/>
</dbReference>
<dbReference type="Gene3D" id="3.40.225.10">
    <property type="entry name" value="Class II aldolase/adducin N-terminal domain"/>
    <property type="match status" value="1"/>
</dbReference>
<dbReference type="HAMAP" id="MF_00770">
    <property type="entry name" value="RhaD"/>
    <property type="match status" value="1"/>
</dbReference>
<dbReference type="InterPro" id="IPR050197">
    <property type="entry name" value="Aldolase_class_II_sugar_metab"/>
</dbReference>
<dbReference type="InterPro" id="IPR001303">
    <property type="entry name" value="Aldolase_II/adducin_N"/>
</dbReference>
<dbReference type="InterPro" id="IPR036409">
    <property type="entry name" value="Aldolase_II/adducin_N_sf"/>
</dbReference>
<dbReference type="InterPro" id="IPR013447">
    <property type="entry name" value="Rhamnulose-1-P_Aldolase"/>
</dbReference>
<dbReference type="NCBIfam" id="NF002963">
    <property type="entry name" value="PRK03634.1"/>
    <property type="match status" value="1"/>
</dbReference>
<dbReference type="NCBIfam" id="TIGR02624">
    <property type="entry name" value="rhamnu_1P_ald"/>
    <property type="match status" value="1"/>
</dbReference>
<dbReference type="PANTHER" id="PTHR22789">
    <property type="entry name" value="FUCULOSE PHOSPHATE ALDOLASE"/>
    <property type="match status" value="1"/>
</dbReference>
<dbReference type="PANTHER" id="PTHR22789:SF16">
    <property type="entry name" value="RHAMNULOSE-1-PHOSPHATE ALDOLASE"/>
    <property type="match status" value="1"/>
</dbReference>
<dbReference type="Pfam" id="PF00596">
    <property type="entry name" value="Aldolase_II"/>
    <property type="match status" value="1"/>
</dbReference>
<dbReference type="SMART" id="SM01007">
    <property type="entry name" value="Aldolase_II"/>
    <property type="match status" value="1"/>
</dbReference>
<dbReference type="SUPFAM" id="SSF53639">
    <property type="entry name" value="AraD/HMP-PK domain-like"/>
    <property type="match status" value="1"/>
</dbReference>
<organism>
    <name type="scientific">Escherichia coli O157:H7 (strain EC4115 / EHEC)</name>
    <dbReference type="NCBI Taxonomy" id="444450"/>
    <lineage>
        <taxon>Bacteria</taxon>
        <taxon>Pseudomonadati</taxon>
        <taxon>Pseudomonadota</taxon>
        <taxon>Gammaproteobacteria</taxon>
        <taxon>Enterobacterales</taxon>
        <taxon>Enterobacteriaceae</taxon>
        <taxon>Escherichia</taxon>
    </lineage>
</organism>
<evidence type="ECO:0000255" key="1">
    <source>
        <dbReference type="HAMAP-Rule" id="MF_00770"/>
    </source>
</evidence>
<proteinExistence type="inferred from homology"/>
<sequence>MQNITQSWFVQGMIKATTDAWLKGWDERNGGNLTLRLDDADIALYHDNFHPQPRYIPLSQPMPLLANTPFIVTGSGKFFRNVQLDPAANLGVVKVDSDGAGYHILWGLTNEAVPTSELPAHFLSHCERIKATNGKDRVIMHCHATNLIALTYVLENDTAVFTRQLWEGSTECLVVFPDGVGILPWMVPGTDEIGQATAQEMQKHSLVLWPFHGVFGSGPTLDETFGLIDTAEKSAEVLVKVYSMGGMKQTISREELIALGQRFGVTPLASALAL</sequence>